<keyword id="KW-0156">Chromatin regulator</keyword>
<keyword id="KW-0223">Dioxygenase</keyword>
<keyword id="KW-0408">Iron</keyword>
<keyword id="KW-0469">Meiosis</keyword>
<keyword id="KW-0479">Metal-binding</keyword>
<keyword id="KW-0539">Nucleus</keyword>
<keyword id="KW-0560">Oxidoreductase</keyword>
<keyword id="KW-1185">Reference proteome</keyword>
<keyword id="KW-0678">Repressor</keyword>
<keyword id="KW-0804">Transcription</keyword>
<keyword id="KW-0805">Transcription regulation</keyword>
<keyword id="KW-0862">Zinc</keyword>
<keyword id="KW-0863">Zinc-finger</keyword>
<comment type="function">
    <text evidence="11 12 13">Functions as a histone H3 'Lys-4' (H3K4me) demethylase involved in the negative regulation of gene expression (PubMed:30712008, PubMed:32572214). Active on H3K4me1, H3K4me2 and H3K4me3 (PubMed:30712008, PubMed:32572214). Not active on mono-, di- and trimethylated H3K9, H3K27 and H3K36 in somatic cells (PubMed:30712008, PubMed:32572214). However, also active on H3K9 when in complex with MMD1, a meiocyte-specific histone reader (PubMed:32572214). Together with MMD1, promotes gene expression in male meiocytes in an H3K9me3-dependent manner, and contributes to meiotic chromosome condensation by triggering some condensin promoters (e.g. CAP-D3 and CAP-H) (PubMed:32572214). Together with JMJ14 and JMJ17, required for plant growth and development (PubMed:31038749). Represses leaf senescence in an age-dependent manner by demethylating H3K4me3 activating histone marks at senescence-associated genes (SAGs) loci, including WRKY53 and SAG201, thus preventing their premature expression (PubMed:30712008).</text>
</comment>
<comment type="catalytic activity">
    <reaction evidence="11 13">
        <text>N(6),N(6),N(6)-trimethyl-L-lysyl(4)-[histone H3] + 2-oxoglutarate + O2 = N(6),N(6)-dimethyl-L-lysyl(4)-[histone H3] + formaldehyde + succinate + CO2</text>
        <dbReference type="Rhea" id="RHEA:60212"/>
        <dbReference type="Rhea" id="RHEA-COMP:15537"/>
        <dbReference type="Rhea" id="RHEA-COMP:15540"/>
        <dbReference type="ChEBI" id="CHEBI:15379"/>
        <dbReference type="ChEBI" id="CHEBI:16526"/>
        <dbReference type="ChEBI" id="CHEBI:16810"/>
        <dbReference type="ChEBI" id="CHEBI:16842"/>
        <dbReference type="ChEBI" id="CHEBI:30031"/>
        <dbReference type="ChEBI" id="CHEBI:61961"/>
        <dbReference type="ChEBI" id="CHEBI:61976"/>
    </reaction>
    <physiologicalReaction direction="left-to-right" evidence="11 13">
        <dbReference type="Rhea" id="RHEA:60213"/>
    </physiologicalReaction>
</comment>
<comment type="catalytic activity">
    <reaction evidence="11 13">
        <text>N(6),N(6)-dimethyl-L-lysyl(4)-[histone H3] + 2-oxoglutarate + O2 = N(6)-methyl-L-lysyl(4)-[histone H3] + formaldehyde + succinate + CO2</text>
        <dbReference type="Rhea" id="RHEA:60216"/>
        <dbReference type="Rhea" id="RHEA-COMP:15540"/>
        <dbReference type="Rhea" id="RHEA-COMP:15543"/>
        <dbReference type="ChEBI" id="CHEBI:15379"/>
        <dbReference type="ChEBI" id="CHEBI:16526"/>
        <dbReference type="ChEBI" id="CHEBI:16810"/>
        <dbReference type="ChEBI" id="CHEBI:16842"/>
        <dbReference type="ChEBI" id="CHEBI:30031"/>
        <dbReference type="ChEBI" id="CHEBI:61929"/>
        <dbReference type="ChEBI" id="CHEBI:61976"/>
    </reaction>
    <physiologicalReaction direction="left-to-right" evidence="11 13">
        <dbReference type="Rhea" id="RHEA:60217"/>
    </physiologicalReaction>
</comment>
<comment type="catalytic activity">
    <reaction evidence="11 13">
        <text>N(6)-methyl-L-lysyl(4)-[histone H3] + 2-oxoglutarate + O2 = L-lysyl(4)-[histone H3] + formaldehyde + succinate + CO2</text>
        <dbReference type="Rhea" id="RHEA:60220"/>
        <dbReference type="Rhea" id="RHEA-COMP:15543"/>
        <dbReference type="Rhea" id="RHEA-COMP:15547"/>
        <dbReference type="ChEBI" id="CHEBI:15379"/>
        <dbReference type="ChEBI" id="CHEBI:16526"/>
        <dbReference type="ChEBI" id="CHEBI:16810"/>
        <dbReference type="ChEBI" id="CHEBI:16842"/>
        <dbReference type="ChEBI" id="CHEBI:29969"/>
        <dbReference type="ChEBI" id="CHEBI:30031"/>
        <dbReference type="ChEBI" id="CHEBI:61929"/>
    </reaction>
    <physiologicalReaction direction="left-to-right" evidence="11 13">
        <dbReference type="Rhea" id="RHEA:60221"/>
    </physiologicalReaction>
</comment>
<comment type="cofactor">
    <cofactor evidence="1">
        <name>Fe(2+)</name>
        <dbReference type="ChEBI" id="CHEBI:29033"/>
    </cofactor>
    <text evidence="1">Binds 1 Fe(2+) ion per subunit.</text>
</comment>
<comment type="subunit">
    <text evidence="13">Interacts with MMD1 in the nucleus of male meiocytes, especially on pachytene chromosomes.</text>
</comment>
<comment type="subcellular location">
    <subcellularLocation>
        <location evidence="3 5 13">Nucleus</location>
    </subcellularLocation>
</comment>
<comment type="tissue specificity">
    <text evidence="9">Confined to inflorescences.</text>
</comment>
<comment type="developmental stage">
    <text evidence="11">Fades out gradually during aging.</text>
</comment>
<comment type="disruption phenotype">
    <text evidence="10 11 12 13">No visible phenotype under normal growth conditions (PubMed:20202164). Abnormal accumulation of reactive oxygen species (ROS) (PubMed:30712008). Hypermethylation of histone H3 'Lys-4' (H3K4me3) (PubMed:30712008, PubMed:32572214). Enhanced expression of genes involved in leaf senescence (e.g. WRKY53 and SAG201) associated with H3K4me3 leading to an early leaf senescence phenotype (PubMed:30712008, PubMed:32572214). Partial sterility with abnormally short siliques and dead pollen grains leading to silique abortion (PubMed:30712008, PubMed:32572214). Male meiocytes are defective in meiotic chromosome condensation (PubMed:32572214). Slightly early flowering (PubMed:30712008). Increased H3K9me3 levels specifically in male meiocytes leading to greater number of down-regulated than up-regulated genes (PubMed:32572214). The double mutant jmj17-1 jmj16-1 has an early flowering phenotype (especially in long day conditions) (PubMed:31038749).</text>
</comment>
<comment type="similarity">
    <text evidence="16">Belongs to the JARID1 histone demethylase family.</text>
</comment>
<comment type="sequence caution" evidence="16">
    <conflict type="erroneous gene model prediction">
        <sequence resource="EMBL-CDS" id="AAF99757"/>
    </conflict>
</comment>
<accession>C0SUT9</accession>
<accession>Q9FRS3</accession>
<sequence length="1209" mass="134993">MGTELMRICVKEDSDDLPSVPPGFESYATFTLKRVVPATTSDKAKTPAIESVSATEQAKMEVESDEAKAARALRRRPWINHSGCDDDGDCAANNDNAASQNPDQNCDVKPALPKGVVRGCEECKDCQKVTARWHPDEARRPDLEDAPVFYPSEEEFEDTLNYIAKIRPEAEKYGICRIVPPPSWKPPCPLKEKQVWEGSKFTTRVQRVDKLQNRSSMKKISKLPNQMRKKKRKCMKMGMDSVTNGMGDPCSASTGMNELETFGFEPGPGFTLKDFQKYADEFKAQYFKKSETSTDDKCKVDNSIDCWEPALEDVEGEYWRIVDKATEEIEVLYGADLETGVFGSGFPKISSSHNASSSEDKYAKSGWNLNNFPRLPGSLLKYEGSDISGVLVPWLYIGMCFSSFCWHVEDHHLYSLNYMHWGAPKLWYGVGGKDAVKLEEAMRKHLPDLFEEQPDLLHKLVTQLSPSKLKTAGVPVHRCVQHAGEFVLTFPRAYHAGFNSGFNCAEAVNVAPVDWLPHGQIAIELYCQQGRKTSISHDKLLLGAAREVVKADWELNLLRKNTVDNLRWKAFSAKDGILAKTLKARIDMERTRREFLCNSSLALKMHSNFDATNERECCICFFDLHLSAAGCRCSPEKYSCLTHVKELCSCPWVTKYFLFRYDIDELNVLVEAVEGKLSSVYRWARQDLGLALSTDVSGSKMEIDEEGKVHKDPTPQTTALSGKDLQLKVTSKEVSKELEKTSKLSHVNLLLKEKEEQITSSHCMKPVKEETVCDSSDPNVSACQPSEGGIICMTAVKSASGKKNSQSLPNDVILLSDDEYDIPRKRGSVRRDAISSGKKLEIRERPTHVLALEASAKIAAPICQREGDSLRDTRNTISLPTNDQKTMRRDVPSSTSHAEVNAEATGLTQDICNRMATNSHGGGKPTSCKSKNSGGLAIVDVVDGTRSSSGTPSCSQNNSPDRFIRQKGPRIAKVVRRINCNVEPLSYGCVLSGKSWCSRRAIFPKGFRSRVKYINILDPTNMCFYISEILDAGRNSPLFMVYLESNPSEVFVHMSPTRCWEMVRERVNQEITKQHKAGKSDLPPLQPSGSPDGFEMFGYSSPAIVQAIEALDVNRVCTDYWDSRPYSRPQVQFPANPLLREANTSGRSNVGNLQLNPGHHISPTGINSILKVLFKKASMEELSSLQEVLSETNSDMVTELVKEEIQNRR</sequence>
<reference key="1">
    <citation type="journal article" date="2000" name="Nature">
        <title>Sequence and analysis of chromosome 1 of the plant Arabidopsis thaliana.</title>
        <authorList>
            <person name="Theologis A."/>
            <person name="Ecker J.R."/>
            <person name="Palm C.J."/>
            <person name="Federspiel N.A."/>
            <person name="Kaul S."/>
            <person name="White O."/>
            <person name="Alonso J."/>
            <person name="Altafi H."/>
            <person name="Araujo R."/>
            <person name="Bowman C.L."/>
            <person name="Brooks S.Y."/>
            <person name="Buehler E."/>
            <person name="Chan A."/>
            <person name="Chao Q."/>
            <person name="Chen H."/>
            <person name="Cheuk R.F."/>
            <person name="Chin C.W."/>
            <person name="Chung M.K."/>
            <person name="Conn L."/>
            <person name="Conway A.B."/>
            <person name="Conway A.R."/>
            <person name="Creasy T.H."/>
            <person name="Dewar K."/>
            <person name="Dunn P."/>
            <person name="Etgu P."/>
            <person name="Feldblyum T.V."/>
            <person name="Feng J.-D."/>
            <person name="Fong B."/>
            <person name="Fujii C.Y."/>
            <person name="Gill J.E."/>
            <person name="Goldsmith A.D."/>
            <person name="Haas B."/>
            <person name="Hansen N.F."/>
            <person name="Hughes B."/>
            <person name="Huizar L."/>
            <person name="Hunter J.L."/>
            <person name="Jenkins J."/>
            <person name="Johnson-Hopson C."/>
            <person name="Khan S."/>
            <person name="Khaykin E."/>
            <person name="Kim C.J."/>
            <person name="Koo H.L."/>
            <person name="Kremenetskaia I."/>
            <person name="Kurtz D.B."/>
            <person name="Kwan A."/>
            <person name="Lam B."/>
            <person name="Langin-Hooper S."/>
            <person name="Lee A."/>
            <person name="Lee J.M."/>
            <person name="Lenz C.A."/>
            <person name="Li J.H."/>
            <person name="Li Y.-P."/>
            <person name="Lin X."/>
            <person name="Liu S.X."/>
            <person name="Liu Z.A."/>
            <person name="Luros J.S."/>
            <person name="Maiti R."/>
            <person name="Marziali A."/>
            <person name="Militscher J."/>
            <person name="Miranda M."/>
            <person name="Nguyen M."/>
            <person name="Nierman W.C."/>
            <person name="Osborne B.I."/>
            <person name="Pai G."/>
            <person name="Peterson J."/>
            <person name="Pham P.K."/>
            <person name="Rizzo M."/>
            <person name="Rooney T."/>
            <person name="Rowley D."/>
            <person name="Sakano H."/>
            <person name="Salzberg S.L."/>
            <person name="Schwartz J.R."/>
            <person name="Shinn P."/>
            <person name="Southwick A.M."/>
            <person name="Sun H."/>
            <person name="Tallon L.J."/>
            <person name="Tambunga G."/>
            <person name="Toriumi M.J."/>
            <person name="Town C.D."/>
            <person name="Utterback T."/>
            <person name="Van Aken S."/>
            <person name="Vaysberg M."/>
            <person name="Vysotskaia V.S."/>
            <person name="Walker M."/>
            <person name="Wu D."/>
            <person name="Yu G."/>
            <person name="Fraser C.M."/>
            <person name="Venter J.C."/>
            <person name="Davis R.W."/>
        </authorList>
    </citation>
    <scope>NUCLEOTIDE SEQUENCE [LARGE SCALE GENOMIC DNA]</scope>
    <source>
        <strain>cv. Columbia</strain>
    </source>
</reference>
<reference key="2">
    <citation type="journal article" date="2017" name="Plant J.">
        <title>Araport11: a complete reannotation of the Arabidopsis thaliana reference genome.</title>
        <authorList>
            <person name="Cheng C.Y."/>
            <person name="Krishnakumar V."/>
            <person name="Chan A.P."/>
            <person name="Thibaud-Nissen F."/>
            <person name="Schobel S."/>
            <person name="Town C.D."/>
        </authorList>
    </citation>
    <scope>GENOME REANNOTATION</scope>
    <source>
        <strain>cv. Columbia</strain>
    </source>
</reference>
<reference key="3">
    <citation type="submission" date="2009-03" db="EMBL/GenBank/DDBJ databases">
        <title>ORF cloning and analysis of Arabidopsis transcription factor genes.</title>
        <authorList>
            <person name="Fujita M."/>
            <person name="Mizukado S."/>
            <person name="Seki M."/>
            <person name="Shinozaki K."/>
            <person name="Mitsuda N."/>
            <person name="Takiguchi Y."/>
            <person name="Takagi M."/>
        </authorList>
    </citation>
    <scope>NUCLEOTIDE SEQUENCE [LARGE SCALE MRNA]</scope>
</reference>
<reference key="4">
    <citation type="journal article" date="2008" name="J. Integr. Plant Biol.">
        <title>Comparative analysis of JmjC domain-containing proteins reveals the potential histone demethylases in Arabidopsis and rice.</title>
        <authorList>
            <person name="Lu F."/>
            <person name="Li G."/>
            <person name="Cui X."/>
            <person name="Liu C."/>
            <person name="Wang X.-J."/>
            <person name="Cao X."/>
        </authorList>
    </citation>
    <scope>GENE FAMILY</scope>
    <scope>NOMENCLATURE</scope>
    <scope>TISSUE SPECIFICITY</scope>
</reference>
<reference key="5">
    <citation type="journal article" date="2010" name="Plant J.">
        <title>A plant-specific histone H3 lysine 4 demethylase represses the floral transition in Arabidopsis.</title>
        <authorList>
            <person name="Yang W."/>
            <person name="Jiang D."/>
            <person name="Jiang J."/>
            <person name="He Y."/>
        </authorList>
    </citation>
    <scope>DISRUPTION PHENOTYPE</scope>
</reference>
<reference key="6">
    <citation type="journal article" date="2019" name="New Phytol.">
        <title>Arabidopsis histone H3K4 demethylase JMJ17 functions in dehydration stress response.</title>
        <authorList>
            <person name="Huang S."/>
            <person name="Zhang A."/>
            <person name="Jin J.B."/>
            <person name="Zhao B."/>
            <person name="Wang T.-J."/>
            <person name="Wu Y."/>
            <person name="Wang S."/>
            <person name="Liu Y."/>
            <person name="Wang J."/>
            <person name="Guo P."/>
            <person name="Ahmad R."/>
            <person name="Liu B."/>
            <person name="Xu Z.-Y."/>
        </authorList>
    </citation>
    <scope>FUNCTION</scope>
    <scope>DISRUPTION PHENOTYPE</scope>
    <source>
        <strain>cv. Columbia</strain>
    </source>
</reference>
<reference key="7">
    <citation type="journal article" date="2019" name="Plant Cell">
        <title>The histone H3K4 demethylase JMJ16 represses leaf senescence in Arabidopsis.</title>
        <authorList>
            <person name="Liu P."/>
            <person name="Zhang S."/>
            <person name="Zhou B."/>
            <person name="Luo X."/>
            <person name="Zhou X.F."/>
            <person name="Cai B."/>
            <person name="Jin Y.H."/>
            <person name="Niu D."/>
            <person name="Lin J."/>
            <person name="Cao X."/>
            <person name="Jin J.B."/>
        </authorList>
    </citation>
    <scope>FUNCTION</scope>
    <scope>MUTAGENESIS OF HIS-407 AND GLU-409</scope>
    <scope>DISRUPTION PHENOTYPE</scope>
    <scope>DEVELOPMENTAL STAGE</scope>
    <scope>CATALYTIC ACTIVITY</scope>
    <source>
        <strain>cv. Columbia</strain>
    </source>
</reference>
<reference key="8">
    <citation type="journal article" date="2020" name="Nat. Plants">
        <title>Cell-type-dependent histone demethylase specificity promotes meiotic chromosome condensation in Arabidopsis.</title>
        <authorList>
            <person name="Wang J."/>
            <person name="Yu C."/>
            <person name="Zhang S."/>
            <person name="Ye J."/>
            <person name="Dai H."/>
            <person name="Wang H."/>
            <person name="Huang J."/>
            <person name="Cao X."/>
            <person name="Ma J."/>
            <person name="Ma H."/>
            <person name="Wang Y."/>
        </authorList>
    </citation>
    <scope>FUNCTION</scope>
    <scope>DISRUPTION PHENOTYPE</scope>
    <scope>CATALYTIC ACTIVITY</scope>
    <scope>INTERACTION WITH MMD1</scope>
    <scope>SUBCELLULAR LOCATION</scope>
    <source>
        <strain>cv. Columbia</strain>
    </source>
</reference>
<proteinExistence type="evidence at protein level"/>
<name>JMJ16_ARATH</name>
<gene>
    <name evidence="14" type="primary">JMJ16</name>
    <name evidence="15" type="synonym">PKDM7D</name>
    <name evidence="17" type="ordered locus">At1g08620</name>
    <name evidence="18" type="ORF">F22O13.10</name>
</gene>
<dbReference type="EC" id="1.14.11.-" evidence="11 13"/>
<dbReference type="EMBL" id="AC003981">
    <property type="protein sequence ID" value="AAF99757.1"/>
    <property type="status" value="ALT_SEQ"/>
    <property type="molecule type" value="Genomic_DNA"/>
</dbReference>
<dbReference type="EMBL" id="CP002684">
    <property type="protein sequence ID" value="AEE28318.1"/>
    <property type="molecule type" value="Genomic_DNA"/>
</dbReference>
<dbReference type="EMBL" id="CP002684">
    <property type="protein sequence ID" value="AEE28319.1"/>
    <property type="molecule type" value="Genomic_DNA"/>
</dbReference>
<dbReference type="EMBL" id="CP002684">
    <property type="protein sequence ID" value="ANM57962.1"/>
    <property type="molecule type" value="Genomic_DNA"/>
</dbReference>
<dbReference type="EMBL" id="AB493442">
    <property type="protein sequence ID" value="BAH30280.1"/>
    <property type="molecule type" value="mRNA"/>
</dbReference>
<dbReference type="PIR" id="G86218">
    <property type="entry name" value="G86218"/>
</dbReference>
<dbReference type="PIR" id="T00715">
    <property type="entry name" value="T00715"/>
</dbReference>
<dbReference type="RefSeq" id="NP_001184940.1">
    <property type="nucleotide sequence ID" value="NM_001198011.2"/>
</dbReference>
<dbReference type="RefSeq" id="NP_001318955.1">
    <property type="nucleotide sequence ID" value="NM_001331778.1"/>
</dbReference>
<dbReference type="RefSeq" id="NP_001320435.1">
    <property type="nucleotide sequence ID" value="NM_001331779.1"/>
</dbReference>
<dbReference type="SMR" id="C0SUT9"/>
<dbReference type="BioGRID" id="22625">
    <property type="interactions" value="3"/>
</dbReference>
<dbReference type="FunCoup" id="C0SUT9">
    <property type="interactions" value="1412"/>
</dbReference>
<dbReference type="STRING" id="3702.C0SUT9"/>
<dbReference type="GlyGen" id="C0SUT9">
    <property type="glycosylation" value="1 site"/>
</dbReference>
<dbReference type="iPTMnet" id="C0SUT9"/>
<dbReference type="PaxDb" id="3702-AT1G08620.1"/>
<dbReference type="ProteomicsDB" id="232236"/>
<dbReference type="EnsemblPlants" id="AT1G08620.1">
    <property type="protein sequence ID" value="AT1G08620.1"/>
    <property type="gene ID" value="AT1G08620"/>
</dbReference>
<dbReference type="EnsemblPlants" id="AT1G08620.2">
    <property type="protein sequence ID" value="AT1G08620.2"/>
    <property type="gene ID" value="AT1G08620"/>
</dbReference>
<dbReference type="EnsemblPlants" id="AT1G08620.4">
    <property type="protein sequence ID" value="AT1G08620.4"/>
    <property type="gene ID" value="AT1G08620"/>
</dbReference>
<dbReference type="GeneID" id="837384"/>
<dbReference type="Gramene" id="AT1G08620.1">
    <property type="protein sequence ID" value="AT1G08620.1"/>
    <property type="gene ID" value="AT1G08620"/>
</dbReference>
<dbReference type="Gramene" id="AT1G08620.2">
    <property type="protein sequence ID" value="AT1G08620.2"/>
    <property type="gene ID" value="AT1G08620"/>
</dbReference>
<dbReference type="Gramene" id="AT1G08620.4">
    <property type="protein sequence ID" value="AT1G08620.4"/>
    <property type="gene ID" value="AT1G08620"/>
</dbReference>
<dbReference type="KEGG" id="ath:AT1G08620"/>
<dbReference type="Araport" id="AT1G08620"/>
<dbReference type="TAIR" id="AT1G08620">
    <property type="gene designation" value="PKDM7D"/>
</dbReference>
<dbReference type="eggNOG" id="KOG1246">
    <property type="taxonomic scope" value="Eukaryota"/>
</dbReference>
<dbReference type="HOGENOM" id="CLU_000991_8_0_1"/>
<dbReference type="InParanoid" id="C0SUT9"/>
<dbReference type="OMA" id="CPDCANC"/>
<dbReference type="PhylomeDB" id="C0SUT9"/>
<dbReference type="PRO" id="PR:C0SUT9"/>
<dbReference type="Proteomes" id="UP000006548">
    <property type="component" value="Chromosome 1"/>
</dbReference>
<dbReference type="ExpressionAtlas" id="C0SUT9">
    <property type="expression patterns" value="baseline and differential"/>
</dbReference>
<dbReference type="GO" id="GO:0005634">
    <property type="term" value="C:nucleus"/>
    <property type="evidence" value="ECO:0000314"/>
    <property type="project" value="UniProtKB"/>
</dbReference>
<dbReference type="GO" id="GO:0034647">
    <property type="term" value="F:histone H3K4me/H3K4me2/H3K4me3 demethylase activity"/>
    <property type="evidence" value="ECO:0000314"/>
    <property type="project" value="UniProtKB"/>
</dbReference>
<dbReference type="GO" id="GO:0032454">
    <property type="term" value="F:histone H3K9 demethylase activity"/>
    <property type="evidence" value="ECO:0000314"/>
    <property type="project" value="UniProtKB"/>
</dbReference>
<dbReference type="GO" id="GO:0032183">
    <property type="term" value="F:SUMO binding"/>
    <property type="evidence" value="ECO:0000353"/>
    <property type="project" value="TAIR"/>
</dbReference>
<dbReference type="GO" id="GO:0008270">
    <property type="term" value="F:zinc ion binding"/>
    <property type="evidence" value="ECO:0007669"/>
    <property type="project" value="UniProtKB-KW"/>
</dbReference>
<dbReference type="GO" id="GO:0006338">
    <property type="term" value="P:chromatin remodeling"/>
    <property type="evidence" value="ECO:0000315"/>
    <property type="project" value="UniProtKB"/>
</dbReference>
<dbReference type="GO" id="GO:0048589">
    <property type="term" value="P:developmental growth"/>
    <property type="evidence" value="ECO:0000315"/>
    <property type="project" value="UniProtKB"/>
</dbReference>
<dbReference type="GO" id="GO:0010032">
    <property type="term" value="P:meiotic chromosome condensation"/>
    <property type="evidence" value="ECO:0000315"/>
    <property type="project" value="UniProtKB"/>
</dbReference>
<dbReference type="GO" id="GO:0045814">
    <property type="term" value="P:negative regulation of gene expression, epigenetic"/>
    <property type="evidence" value="ECO:0000314"/>
    <property type="project" value="UniProtKB"/>
</dbReference>
<dbReference type="GO" id="GO:1900056">
    <property type="term" value="P:negative regulation of leaf senescence"/>
    <property type="evidence" value="ECO:0000315"/>
    <property type="project" value="UniProtKB"/>
</dbReference>
<dbReference type="GO" id="GO:0099402">
    <property type="term" value="P:plant organ development"/>
    <property type="evidence" value="ECO:0000315"/>
    <property type="project" value="UniProtKB"/>
</dbReference>
<dbReference type="GO" id="GO:1905821">
    <property type="term" value="P:positive regulation of chromosome condensation"/>
    <property type="evidence" value="ECO:0000315"/>
    <property type="project" value="UniProtKB"/>
</dbReference>
<dbReference type="GO" id="GO:0010628">
    <property type="term" value="P:positive regulation of gene expression"/>
    <property type="evidence" value="ECO:0000315"/>
    <property type="project" value="UniProtKB"/>
</dbReference>
<dbReference type="GO" id="GO:1903409">
    <property type="term" value="P:reactive oxygen species biosynthetic process"/>
    <property type="evidence" value="ECO:0000315"/>
    <property type="project" value="UniProtKB"/>
</dbReference>
<dbReference type="GO" id="GO:0006355">
    <property type="term" value="P:regulation of DNA-templated transcription"/>
    <property type="evidence" value="ECO:0000304"/>
    <property type="project" value="TAIR"/>
</dbReference>
<dbReference type="FunFam" id="3.30.160.360:FF:000005">
    <property type="entry name" value="Putative lysine-specific demethylase JMJ16"/>
    <property type="match status" value="1"/>
</dbReference>
<dbReference type="Gene3D" id="3.30.160.360">
    <property type="match status" value="1"/>
</dbReference>
<dbReference type="Gene3D" id="2.60.120.650">
    <property type="entry name" value="Cupin"/>
    <property type="match status" value="1"/>
</dbReference>
<dbReference type="InterPro" id="IPR003889">
    <property type="entry name" value="FYrich_C"/>
</dbReference>
<dbReference type="InterPro" id="IPR003888">
    <property type="entry name" value="FYrich_N"/>
</dbReference>
<dbReference type="InterPro" id="IPR003347">
    <property type="entry name" value="JmjC_dom"/>
</dbReference>
<dbReference type="InterPro" id="IPR003349">
    <property type="entry name" value="JmjN"/>
</dbReference>
<dbReference type="InterPro" id="IPR004198">
    <property type="entry name" value="Znf_C5HC2"/>
</dbReference>
<dbReference type="PANTHER" id="PTHR10694">
    <property type="entry name" value="LYSINE-SPECIFIC DEMETHYLASE"/>
    <property type="match status" value="1"/>
</dbReference>
<dbReference type="PANTHER" id="PTHR10694:SF113">
    <property type="entry name" value="PROTEIN JUMONJI"/>
    <property type="match status" value="1"/>
</dbReference>
<dbReference type="Pfam" id="PF05965">
    <property type="entry name" value="FYRC"/>
    <property type="match status" value="1"/>
</dbReference>
<dbReference type="Pfam" id="PF05964">
    <property type="entry name" value="FYRN"/>
    <property type="match status" value="1"/>
</dbReference>
<dbReference type="Pfam" id="PF02373">
    <property type="entry name" value="JmjC"/>
    <property type="match status" value="1"/>
</dbReference>
<dbReference type="Pfam" id="PF02375">
    <property type="entry name" value="JmjN"/>
    <property type="match status" value="1"/>
</dbReference>
<dbReference type="Pfam" id="PF02928">
    <property type="entry name" value="zf-C5HC2"/>
    <property type="match status" value="1"/>
</dbReference>
<dbReference type="SMART" id="SM00542">
    <property type="entry name" value="FYRC"/>
    <property type="match status" value="1"/>
</dbReference>
<dbReference type="SMART" id="SM00541">
    <property type="entry name" value="FYRN"/>
    <property type="match status" value="1"/>
</dbReference>
<dbReference type="SMART" id="SM00558">
    <property type="entry name" value="JmjC"/>
    <property type="match status" value="1"/>
</dbReference>
<dbReference type="SMART" id="SM00545">
    <property type="entry name" value="JmjN"/>
    <property type="match status" value="1"/>
</dbReference>
<dbReference type="SUPFAM" id="SSF51197">
    <property type="entry name" value="Clavaminate synthase-like"/>
    <property type="match status" value="1"/>
</dbReference>
<dbReference type="PROSITE" id="PS51543">
    <property type="entry name" value="FYRC"/>
    <property type="match status" value="1"/>
</dbReference>
<dbReference type="PROSITE" id="PS51542">
    <property type="entry name" value="FYRN"/>
    <property type="match status" value="1"/>
</dbReference>
<dbReference type="PROSITE" id="PS51184">
    <property type="entry name" value="JMJC"/>
    <property type="match status" value="1"/>
</dbReference>
<dbReference type="PROSITE" id="PS51183">
    <property type="entry name" value="JMJN"/>
    <property type="match status" value="1"/>
</dbReference>
<organism>
    <name type="scientific">Arabidopsis thaliana</name>
    <name type="common">Mouse-ear cress</name>
    <dbReference type="NCBI Taxonomy" id="3702"/>
    <lineage>
        <taxon>Eukaryota</taxon>
        <taxon>Viridiplantae</taxon>
        <taxon>Streptophyta</taxon>
        <taxon>Embryophyta</taxon>
        <taxon>Tracheophyta</taxon>
        <taxon>Spermatophyta</taxon>
        <taxon>Magnoliopsida</taxon>
        <taxon>eudicotyledons</taxon>
        <taxon>Gunneridae</taxon>
        <taxon>Pentapetalae</taxon>
        <taxon>rosids</taxon>
        <taxon>malvids</taxon>
        <taxon>Brassicales</taxon>
        <taxon>Brassicaceae</taxon>
        <taxon>Camelineae</taxon>
        <taxon>Arabidopsis</taxon>
    </lineage>
</organism>
<evidence type="ECO:0000250" key="1">
    <source>
        <dbReference type="UniProtKB" id="Q8GUI6"/>
    </source>
</evidence>
<evidence type="ECO:0000255" key="2"/>
<evidence type="ECO:0000255" key="3">
    <source>
        <dbReference type="PROSITE-ProRule" id="PRU00537"/>
    </source>
</evidence>
<evidence type="ECO:0000255" key="4">
    <source>
        <dbReference type="PROSITE-ProRule" id="PRU00538"/>
    </source>
</evidence>
<evidence type="ECO:0000255" key="5">
    <source>
        <dbReference type="PROSITE-ProRule" id="PRU00768"/>
    </source>
</evidence>
<evidence type="ECO:0000255" key="6">
    <source>
        <dbReference type="PROSITE-ProRule" id="PRU00875"/>
    </source>
</evidence>
<evidence type="ECO:0000255" key="7">
    <source>
        <dbReference type="PROSITE-ProRule" id="PRU00876"/>
    </source>
</evidence>
<evidence type="ECO:0000256" key="8">
    <source>
        <dbReference type="SAM" id="MobiDB-lite"/>
    </source>
</evidence>
<evidence type="ECO:0000269" key="9">
    <source>
    </source>
</evidence>
<evidence type="ECO:0000269" key="10">
    <source>
    </source>
</evidence>
<evidence type="ECO:0000269" key="11">
    <source>
    </source>
</evidence>
<evidence type="ECO:0000269" key="12">
    <source>
    </source>
</evidence>
<evidence type="ECO:0000269" key="13">
    <source>
    </source>
</evidence>
<evidence type="ECO:0000303" key="14">
    <source>
    </source>
</evidence>
<evidence type="ECO:0000303" key="15">
    <source>
    </source>
</evidence>
<evidence type="ECO:0000305" key="16"/>
<evidence type="ECO:0000312" key="17">
    <source>
        <dbReference type="Araport" id="AT1G08620"/>
    </source>
</evidence>
<evidence type="ECO:0000312" key="18">
    <source>
        <dbReference type="EMBL" id="AAF99757.1"/>
    </source>
</evidence>
<protein>
    <recommendedName>
        <fullName evidence="16">Putative lysine-specific demethylase JMJ16</fullName>
        <ecNumber evidence="11 13">1.14.11.-</ecNumber>
    </recommendedName>
    <alternativeName>
        <fullName evidence="14">Jumonji domain-containing protein 16</fullName>
        <shortName evidence="14">AtJMJ16</shortName>
        <shortName evidence="14">Protein JUMONJI 16</shortName>
    </alternativeName>
    <alternativeName>
        <fullName evidence="16">Lysine-specific histone demethylase JMJ16</fullName>
    </alternativeName>
    <alternativeName>
        <fullName evidence="16">[histone H3]-trimethyl-L-lysine(4) monodemethylase JMJ16</fullName>
    </alternativeName>
</protein>
<feature type="chain" id="PRO_0000429995" description="Putative lysine-specific demethylase JMJ16">
    <location>
        <begin position="1"/>
        <end position="1209"/>
    </location>
</feature>
<feature type="domain" description="JmjN" evidence="3">
    <location>
        <begin position="146"/>
        <end position="187"/>
    </location>
</feature>
<feature type="domain" description="JmjC" evidence="4">
    <location>
        <begin position="361"/>
        <end position="527"/>
    </location>
</feature>
<feature type="domain" description="FYR N-terminal" evidence="6">
    <location>
        <begin position="974"/>
        <end position="1032"/>
    </location>
</feature>
<feature type="domain" description="FYR C-terminal" evidence="7">
    <location>
        <begin position="1034"/>
        <end position="1124"/>
    </location>
</feature>
<feature type="zinc finger region" description="C5HC2" evidence="2">
    <location>
        <begin position="617"/>
        <end position="667"/>
    </location>
</feature>
<feature type="region of interest" description="Disordered" evidence="8">
    <location>
        <begin position="872"/>
        <end position="900"/>
    </location>
</feature>
<feature type="short sequence motif" description="Nuclear localization signal" evidence="5">
    <location>
        <begin position="217"/>
        <end position="224"/>
    </location>
</feature>
<feature type="compositionally biased region" description="Polar residues" evidence="8">
    <location>
        <begin position="875"/>
        <end position="884"/>
    </location>
</feature>
<feature type="binding site" evidence="4">
    <location>
        <position position="407"/>
    </location>
    <ligand>
        <name>Fe cation</name>
        <dbReference type="ChEBI" id="CHEBI:24875"/>
        <note>catalytic</note>
    </ligand>
</feature>
<feature type="binding site" evidence="4">
    <location>
        <position position="409"/>
    </location>
    <ligand>
        <name>Fe cation</name>
        <dbReference type="ChEBI" id="CHEBI:24875"/>
        <note>catalytic</note>
    </ligand>
</feature>
<feature type="binding site" evidence="4">
    <location>
        <position position="495"/>
    </location>
    <ligand>
        <name>Fe cation</name>
        <dbReference type="ChEBI" id="CHEBI:24875"/>
        <note>catalytic</note>
    </ligand>
</feature>
<feature type="binding site" evidence="1">
    <location>
        <position position="617"/>
    </location>
    <ligand>
        <name>Zn(2+)</name>
        <dbReference type="ChEBI" id="CHEBI:29105"/>
        <label>1</label>
    </ligand>
</feature>
<feature type="binding site" evidence="1">
    <location>
        <position position="620"/>
    </location>
    <ligand>
        <name>Zn(2+)</name>
        <dbReference type="ChEBI" id="CHEBI:29105"/>
        <label>1</label>
    </ligand>
</feature>
<feature type="binding site" evidence="1">
    <location>
        <position position="631"/>
    </location>
    <ligand>
        <name>Zn(2+)</name>
        <dbReference type="ChEBI" id="CHEBI:29105"/>
        <label>2</label>
    </ligand>
</feature>
<feature type="binding site" evidence="1">
    <location>
        <position position="633"/>
    </location>
    <ligand>
        <name>Zn(2+)</name>
        <dbReference type="ChEBI" id="CHEBI:29105"/>
        <label>2</label>
    </ligand>
</feature>
<feature type="binding site" evidence="1">
    <location>
        <position position="640"/>
    </location>
    <ligand>
        <name>Zn(2+)</name>
        <dbReference type="ChEBI" id="CHEBI:29105"/>
        <label>1</label>
    </ligand>
</feature>
<feature type="binding site" evidence="1">
    <location>
        <position position="643"/>
    </location>
    <ligand>
        <name>Zn(2+)</name>
        <dbReference type="ChEBI" id="CHEBI:29105"/>
        <label>1</label>
    </ligand>
</feature>
<feature type="binding site" evidence="1">
    <location>
        <position position="648"/>
    </location>
    <ligand>
        <name>Zn(2+)</name>
        <dbReference type="ChEBI" id="CHEBI:29105"/>
        <label>2</label>
    </ligand>
</feature>
<feature type="binding site" evidence="1">
    <location>
        <position position="650"/>
    </location>
    <ligand>
        <name>Zn(2+)</name>
        <dbReference type="ChEBI" id="CHEBI:29105"/>
        <label>2</label>
    </ligand>
</feature>
<feature type="mutagenesis site" description="Abolished H3K4 demethylase activity leading to early leaf senescence; when associated with A-409." evidence="11">
    <original>H</original>
    <variation>A</variation>
    <location>
        <position position="407"/>
    </location>
</feature>
<feature type="mutagenesis site" description="Abolished H3K4 demethylase activity leading to early leaf senescence; when associated with A-407." evidence="11">
    <original>E</original>
    <variation>A</variation>
    <location>
        <position position="409"/>
    </location>
</feature>